<name>RS13_CLOB1</name>
<organism>
    <name type="scientific">Clostridium botulinum (strain ATCC 19397 / Type A)</name>
    <dbReference type="NCBI Taxonomy" id="441770"/>
    <lineage>
        <taxon>Bacteria</taxon>
        <taxon>Bacillati</taxon>
        <taxon>Bacillota</taxon>
        <taxon>Clostridia</taxon>
        <taxon>Eubacteriales</taxon>
        <taxon>Clostridiaceae</taxon>
        <taxon>Clostridium</taxon>
    </lineage>
</organism>
<evidence type="ECO:0000255" key="1">
    <source>
        <dbReference type="HAMAP-Rule" id="MF_01315"/>
    </source>
</evidence>
<evidence type="ECO:0000256" key="2">
    <source>
        <dbReference type="SAM" id="MobiDB-lite"/>
    </source>
</evidence>
<evidence type="ECO:0000305" key="3"/>
<keyword id="KW-0687">Ribonucleoprotein</keyword>
<keyword id="KW-0689">Ribosomal protein</keyword>
<keyword id="KW-0694">RNA-binding</keyword>
<keyword id="KW-0699">rRNA-binding</keyword>
<keyword id="KW-0820">tRNA-binding</keyword>
<gene>
    <name evidence="1" type="primary">rpsM</name>
    <name type="ordered locus">CLB_3511</name>
</gene>
<dbReference type="EMBL" id="CP000726">
    <property type="protein sequence ID" value="ABS34537.1"/>
    <property type="molecule type" value="Genomic_DNA"/>
</dbReference>
<dbReference type="RefSeq" id="WP_003357564.1">
    <property type="nucleotide sequence ID" value="NC_009697.1"/>
</dbReference>
<dbReference type="SMR" id="A7FZ47"/>
<dbReference type="GeneID" id="92940224"/>
<dbReference type="KEGG" id="cba:CLB_3511"/>
<dbReference type="HOGENOM" id="CLU_103849_1_2_9"/>
<dbReference type="GO" id="GO:0005829">
    <property type="term" value="C:cytosol"/>
    <property type="evidence" value="ECO:0007669"/>
    <property type="project" value="TreeGrafter"/>
</dbReference>
<dbReference type="GO" id="GO:0015935">
    <property type="term" value="C:small ribosomal subunit"/>
    <property type="evidence" value="ECO:0007669"/>
    <property type="project" value="TreeGrafter"/>
</dbReference>
<dbReference type="GO" id="GO:0019843">
    <property type="term" value="F:rRNA binding"/>
    <property type="evidence" value="ECO:0007669"/>
    <property type="project" value="UniProtKB-UniRule"/>
</dbReference>
<dbReference type="GO" id="GO:0003735">
    <property type="term" value="F:structural constituent of ribosome"/>
    <property type="evidence" value="ECO:0007669"/>
    <property type="project" value="InterPro"/>
</dbReference>
<dbReference type="GO" id="GO:0000049">
    <property type="term" value="F:tRNA binding"/>
    <property type="evidence" value="ECO:0007669"/>
    <property type="project" value="UniProtKB-UniRule"/>
</dbReference>
<dbReference type="GO" id="GO:0006412">
    <property type="term" value="P:translation"/>
    <property type="evidence" value="ECO:0007669"/>
    <property type="project" value="UniProtKB-UniRule"/>
</dbReference>
<dbReference type="FunFam" id="1.10.8.50:FF:000001">
    <property type="entry name" value="30S ribosomal protein S13"/>
    <property type="match status" value="1"/>
</dbReference>
<dbReference type="FunFam" id="4.10.910.10:FF:000001">
    <property type="entry name" value="30S ribosomal protein S13"/>
    <property type="match status" value="1"/>
</dbReference>
<dbReference type="Gene3D" id="1.10.8.50">
    <property type="match status" value="1"/>
</dbReference>
<dbReference type="Gene3D" id="4.10.910.10">
    <property type="entry name" value="30s ribosomal protein s13, domain 2"/>
    <property type="match status" value="1"/>
</dbReference>
<dbReference type="HAMAP" id="MF_01315">
    <property type="entry name" value="Ribosomal_uS13"/>
    <property type="match status" value="1"/>
</dbReference>
<dbReference type="InterPro" id="IPR027437">
    <property type="entry name" value="Rbsml_uS13_C"/>
</dbReference>
<dbReference type="InterPro" id="IPR001892">
    <property type="entry name" value="Ribosomal_uS13"/>
</dbReference>
<dbReference type="InterPro" id="IPR010979">
    <property type="entry name" value="Ribosomal_uS13-like_H2TH"/>
</dbReference>
<dbReference type="InterPro" id="IPR019980">
    <property type="entry name" value="Ribosomal_uS13_bac-type"/>
</dbReference>
<dbReference type="InterPro" id="IPR018269">
    <property type="entry name" value="Ribosomal_uS13_CS"/>
</dbReference>
<dbReference type="NCBIfam" id="TIGR03631">
    <property type="entry name" value="uS13_bact"/>
    <property type="match status" value="1"/>
</dbReference>
<dbReference type="PANTHER" id="PTHR10871">
    <property type="entry name" value="30S RIBOSOMAL PROTEIN S13/40S RIBOSOMAL PROTEIN S18"/>
    <property type="match status" value="1"/>
</dbReference>
<dbReference type="PANTHER" id="PTHR10871:SF1">
    <property type="entry name" value="SMALL RIBOSOMAL SUBUNIT PROTEIN US13M"/>
    <property type="match status" value="1"/>
</dbReference>
<dbReference type="Pfam" id="PF00416">
    <property type="entry name" value="Ribosomal_S13"/>
    <property type="match status" value="1"/>
</dbReference>
<dbReference type="PIRSF" id="PIRSF002134">
    <property type="entry name" value="Ribosomal_S13"/>
    <property type="match status" value="1"/>
</dbReference>
<dbReference type="SUPFAM" id="SSF46946">
    <property type="entry name" value="S13-like H2TH domain"/>
    <property type="match status" value="1"/>
</dbReference>
<dbReference type="PROSITE" id="PS00646">
    <property type="entry name" value="RIBOSOMAL_S13_1"/>
    <property type="match status" value="1"/>
</dbReference>
<dbReference type="PROSITE" id="PS50159">
    <property type="entry name" value="RIBOSOMAL_S13_2"/>
    <property type="match status" value="1"/>
</dbReference>
<accession>A7FZ47</accession>
<protein>
    <recommendedName>
        <fullName evidence="1">Small ribosomal subunit protein uS13</fullName>
    </recommendedName>
    <alternativeName>
        <fullName evidence="3">30S ribosomal protein S13</fullName>
    </alternativeName>
</protein>
<proteinExistence type="inferred from homology"/>
<sequence>MARISGIDLPKEKRVEIGLTYIYGIGLPTSQEILKATGVNPDTRVKDLSEEEVNAIRDYVNKNVKVEGDLRREIKLNIKRLVEIGSYRGIRHRRNLPVRGQKTKTNARTRKGPKRAIGGKKKK</sequence>
<reference key="1">
    <citation type="journal article" date="2007" name="PLoS ONE">
        <title>Analysis of the neurotoxin complex genes in Clostridium botulinum A1-A4 and B1 strains: BoNT/A3, /Ba4 and /B1 clusters are located within plasmids.</title>
        <authorList>
            <person name="Smith T.J."/>
            <person name="Hill K.K."/>
            <person name="Foley B.T."/>
            <person name="Detter J.C."/>
            <person name="Munk A.C."/>
            <person name="Bruce D.C."/>
            <person name="Doggett N.A."/>
            <person name="Smith L.A."/>
            <person name="Marks J.D."/>
            <person name="Xie G."/>
            <person name="Brettin T.S."/>
        </authorList>
    </citation>
    <scope>NUCLEOTIDE SEQUENCE [LARGE SCALE GENOMIC DNA]</scope>
    <source>
        <strain>ATCC 19397 / Type A</strain>
    </source>
</reference>
<comment type="function">
    <text evidence="1">Located at the top of the head of the 30S subunit, it contacts several helices of the 16S rRNA. In the 70S ribosome it contacts the 23S rRNA (bridge B1a) and protein L5 of the 50S subunit (bridge B1b), connecting the 2 subunits; these bridges are implicated in subunit movement. Contacts the tRNAs in the A and P-sites.</text>
</comment>
<comment type="subunit">
    <text evidence="1">Part of the 30S ribosomal subunit. Forms a loose heterodimer with protein S19. Forms two bridges to the 50S subunit in the 70S ribosome.</text>
</comment>
<comment type="similarity">
    <text evidence="1">Belongs to the universal ribosomal protein uS13 family.</text>
</comment>
<feature type="chain" id="PRO_1000051877" description="Small ribosomal subunit protein uS13">
    <location>
        <begin position="1"/>
        <end position="123"/>
    </location>
</feature>
<feature type="region of interest" description="Disordered" evidence="2">
    <location>
        <begin position="93"/>
        <end position="123"/>
    </location>
</feature>